<accession>P04123</accession>
<proteinExistence type="evidence at protein level"/>
<comment type="function">
    <text>Antenna complexes are light-harvesting systems, which transfer the excitation energy to the reaction centers.</text>
</comment>
<comment type="subunit">
    <text>The core complex is formed by different alpha and beta chains, binding bacteriochlorophyll molecules, and arranged most probably in tetrameric structures disposed around the reaction center. The non-pigmented gamma chains may constitute additional components.</text>
</comment>
<comment type="subcellular location">
    <subcellularLocation>
        <location>Cell inner membrane</location>
        <topology>Single-pass type II membrane protein</topology>
    </subcellularLocation>
</comment>
<comment type="similarity">
    <text evidence="3">Belongs to the antenna complex alpha subunit family.</text>
</comment>
<organism>
    <name type="scientific">Blastochloris viridis</name>
    <name type="common">Rhodopseudomonas viridis</name>
    <dbReference type="NCBI Taxonomy" id="1079"/>
    <lineage>
        <taxon>Bacteria</taxon>
        <taxon>Pseudomonadati</taxon>
        <taxon>Pseudomonadota</taxon>
        <taxon>Alphaproteobacteria</taxon>
        <taxon>Hyphomicrobiales</taxon>
        <taxon>Blastochloridaceae</taxon>
        <taxon>Blastochloris</taxon>
    </lineage>
</organism>
<protein>
    <recommendedName>
        <fullName>Light-harvesting protein B-1015 alpha chain</fullName>
    </recommendedName>
    <alternativeName>
        <fullName>Antenna pigment protein alpha chain</fullName>
    </alternativeName>
</protein>
<gene>
    <name type="primary">pufA</name>
</gene>
<feature type="initiator methionine" description="Removed" evidence="2">
    <location>
        <position position="1"/>
    </location>
</feature>
<feature type="chain" id="PRO_0000001627" description="Light-harvesting protein B-1015 alpha chain">
    <location>
        <begin position="2"/>
        <end position="59"/>
    </location>
</feature>
<feature type="propeptide" id="PRO_0000001628">
    <location>
        <begin position="60"/>
        <end position="69"/>
    </location>
</feature>
<feature type="topological domain" description="Cytoplasmic" evidence="1">
    <location>
        <begin position="2"/>
        <end position="20"/>
    </location>
</feature>
<feature type="transmembrane region" description="Helical" evidence="1">
    <location>
        <begin position="21"/>
        <end position="41"/>
    </location>
</feature>
<feature type="topological domain" description="Periplasmic" evidence="1">
    <location>
        <begin position="42"/>
        <end position="59"/>
    </location>
</feature>
<feature type="binding site" description="axial binding residue" evidence="1">
    <location>
        <position position="37"/>
    </location>
    <ligand>
        <name>a bacteriochlorophyll</name>
        <dbReference type="ChEBI" id="CHEBI:38201"/>
    </ligand>
    <ligandPart>
        <name>Mg</name>
        <dbReference type="ChEBI" id="CHEBI:25107"/>
    </ligandPart>
</feature>
<feature type="strand" evidence="4">
    <location>
        <begin position="6"/>
        <end position="8"/>
    </location>
</feature>
<feature type="helix" evidence="4">
    <location>
        <begin position="9"/>
        <end position="11"/>
    </location>
</feature>
<feature type="helix" evidence="4">
    <location>
        <begin position="12"/>
        <end position="16"/>
    </location>
</feature>
<feature type="helix" evidence="4">
    <location>
        <begin position="18"/>
        <end position="40"/>
    </location>
</feature>
<feature type="strand" evidence="4">
    <location>
        <begin position="49"/>
        <end position="51"/>
    </location>
</feature>
<dbReference type="EMBL" id="M55261">
    <property type="protein sequence ID" value="AAA64256.1"/>
    <property type="molecule type" value="Genomic_DNA"/>
</dbReference>
<dbReference type="PIR" id="C35382">
    <property type="entry name" value="LBRFAV"/>
</dbReference>
<dbReference type="RefSeq" id="WP_055036365.1">
    <property type="nucleotide sequence ID" value="NZ_AP014854.2"/>
</dbReference>
<dbReference type="PDB" id="6ET5">
    <property type="method" value="EM"/>
    <property type="resolution" value="3.00 A"/>
    <property type="chains" value="3/6/F/K/P/S/V/Y/b/e/h/k/n/q/t/w/z=1-59"/>
</dbReference>
<dbReference type="PDBsum" id="6ET5"/>
<dbReference type="EMDB" id="EMD-3951"/>
<dbReference type="SMR" id="P04123"/>
<dbReference type="IntAct" id="P04123">
    <property type="interactions" value="1"/>
</dbReference>
<dbReference type="STRING" id="1079.BVIR_603"/>
<dbReference type="OrthoDB" id="8564165at2"/>
<dbReference type="GO" id="GO:0019866">
    <property type="term" value="C:organelle inner membrane"/>
    <property type="evidence" value="ECO:0007669"/>
    <property type="project" value="InterPro"/>
</dbReference>
<dbReference type="GO" id="GO:0005886">
    <property type="term" value="C:plasma membrane"/>
    <property type="evidence" value="ECO:0007669"/>
    <property type="project" value="UniProtKB-SubCell"/>
</dbReference>
<dbReference type="GO" id="GO:0030077">
    <property type="term" value="C:plasma membrane light-harvesting complex"/>
    <property type="evidence" value="ECO:0007669"/>
    <property type="project" value="InterPro"/>
</dbReference>
<dbReference type="GO" id="GO:0042314">
    <property type="term" value="F:bacteriochlorophyll binding"/>
    <property type="evidence" value="ECO:0007669"/>
    <property type="project" value="UniProtKB-KW"/>
</dbReference>
<dbReference type="GO" id="GO:0045156">
    <property type="term" value="F:electron transporter, transferring electrons within the cyclic electron transport pathway of photosynthesis activity"/>
    <property type="evidence" value="ECO:0007669"/>
    <property type="project" value="InterPro"/>
</dbReference>
<dbReference type="GO" id="GO:0046872">
    <property type="term" value="F:metal ion binding"/>
    <property type="evidence" value="ECO:0007669"/>
    <property type="project" value="UniProtKB-KW"/>
</dbReference>
<dbReference type="GO" id="GO:0019684">
    <property type="term" value="P:photosynthesis, light reaction"/>
    <property type="evidence" value="ECO:0007669"/>
    <property type="project" value="InterPro"/>
</dbReference>
<dbReference type="Gene3D" id="4.10.220.20">
    <property type="entry name" value="Light-harvesting complex"/>
    <property type="match status" value="1"/>
</dbReference>
<dbReference type="InterPro" id="IPR000066">
    <property type="entry name" value="Antenna_a/b"/>
</dbReference>
<dbReference type="InterPro" id="IPR018332">
    <property type="entry name" value="Antenna_alpha"/>
</dbReference>
<dbReference type="InterPro" id="IPR002361">
    <property type="entry name" value="Antenna_alpha_CS"/>
</dbReference>
<dbReference type="InterPro" id="IPR035889">
    <property type="entry name" value="Light-harvesting_complex"/>
</dbReference>
<dbReference type="NCBIfam" id="NF040861">
    <property type="entry name" value="pufA_517_ASD"/>
    <property type="match status" value="1"/>
</dbReference>
<dbReference type="Pfam" id="PF00556">
    <property type="entry name" value="LHC"/>
    <property type="match status" value="1"/>
</dbReference>
<dbReference type="PRINTS" id="PR00673">
    <property type="entry name" value="LIGHTHARVSTA"/>
</dbReference>
<dbReference type="SUPFAM" id="SSF56918">
    <property type="entry name" value="Light-harvesting complex subunits"/>
    <property type="match status" value="1"/>
</dbReference>
<dbReference type="PROSITE" id="PS00968">
    <property type="entry name" value="ANTENNA_COMP_ALPHA"/>
    <property type="match status" value="1"/>
</dbReference>
<reference key="1">
    <citation type="journal article" date="1990" name="J. Bacteriol.">
        <title>Structure and transcription of the genes encoding the B1015 light-harvesting complex beta and alpha subunits and the photosynthetic reaction center L, M, and cytochrome c subunits from Rhodopseudomonas viridis.</title>
        <authorList>
            <person name="Wiessner C."/>
            <person name="Dunger I."/>
            <person name="Michel H."/>
        </authorList>
    </citation>
    <scope>NUCLEOTIDE SEQUENCE [GENOMIC DNA]</scope>
</reference>
<reference key="2">
    <citation type="journal article" date="1985" name="Biol. Chem. Hoppe-Seyler">
        <title>The light-harvesting polypeptides of Rhodopseudomonas viridis. The complete amino-acid sequences of B1015-alpha, B1015-beta and B1015-gamma.</title>
        <authorList>
            <person name="Brunisholz R.A."/>
            <person name="Jay F."/>
            <person name="Suter F."/>
            <person name="Zuber H."/>
        </authorList>
    </citation>
    <scope>PROTEIN SEQUENCE OF 2-59</scope>
</reference>
<evidence type="ECO:0000255" key="1"/>
<evidence type="ECO:0000269" key="2">
    <source>
    </source>
</evidence>
<evidence type="ECO:0000305" key="3"/>
<evidence type="ECO:0007829" key="4">
    <source>
        <dbReference type="PDB" id="6ET5"/>
    </source>
</evidence>
<sequence>MATEYRTASWKLWLILDPRRVLTALFVYLTVIALLIHFGLLSTDRLNWWEFQRGLPKAASLVVVPPAVG</sequence>
<keyword id="KW-0002">3D-structure</keyword>
<keyword id="KW-0042">Antenna complex</keyword>
<keyword id="KW-0076">Bacteriochlorophyll</keyword>
<keyword id="KW-0997">Cell inner membrane</keyword>
<keyword id="KW-1003">Cell membrane</keyword>
<keyword id="KW-0148">Chlorophyll</keyword>
<keyword id="KW-0157">Chromophore</keyword>
<keyword id="KW-0903">Direct protein sequencing</keyword>
<keyword id="KW-0437">Light-harvesting polypeptide</keyword>
<keyword id="KW-0460">Magnesium</keyword>
<keyword id="KW-0472">Membrane</keyword>
<keyword id="KW-0479">Metal-binding</keyword>
<keyword id="KW-0812">Transmembrane</keyword>
<keyword id="KW-1133">Transmembrane helix</keyword>
<name>LHA_BLAVI</name>